<comment type="function">
    <text evidence="1">Catalyzes the reversible formation of acyl-phosphate (acyl-PO(4)) from acyl-[acyl-carrier-protein] (acyl-ACP). This enzyme utilizes acyl-ACP as fatty acyl donor, but not acyl-CoA.</text>
</comment>
<comment type="catalytic activity">
    <reaction evidence="1">
        <text>a fatty acyl-[ACP] + phosphate = an acyl phosphate + holo-[ACP]</text>
        <dbReference type="Rhea" id="RHEA:42292"/>
        <dbReference type="Rhea" id="RHEA-COMP:9685"/>
        <dbReference type="Rhea" id="RHEA-COMP:14125"/>
        <dbReference type="ChEBI" id="CHEBI:43474"/>
        <dbReference type="ChEBI" id="CHEBI:59918"/>
        <dbReference type="ChEBI" id="CHEBI:64479"/>
        <dbReference type="ChEBI" id="CHEBI:138651"/>
        <dbReference type="EC" id="2.3.1.274"/>
    </reaction>
</comment>
<comment type="pathway">
    <text evidence="1">Lipid metabolism; phospholipid metabolism.</text>
</comment>
<comment type="subunit">
    <text evidence="1">Homodimer. Probably interacts with PlsY.</text>
</comment>
<comment type="subcellular location">
    <subcellularLocation>
        <location evidence="1">Cytoplasm</location>
    </subcellularLocation>
    <text evidence="1">Associated with the membrane possibly through PlsY.</text>
</comment>
<comment type="similarity">
    <text evidence="1">Belongs to the PlsX family.</text>
</comment>
<reference key="1">
    <citation type="journal article" date="2010" name="PLoS ONE">
        <title>The complete genome sequence of Cupriavidus metallidurans strain CH34, a master survivalist in harsh and anthropogenic environments.</title>
        <authorList>
            <person name="Janssen P.J."/>
            <person name="Van Houdt R."/>
            <person name="Moors H."/>
            <person name="Monsieurs P."/>
            <person name="Morin N."/>
            <person name="Michaux A."/>
            <person name="Benotmane M.A."/>
            <person name="Leys N."/>
            <person name="Vallaeys T."/>
            <person name="Lapidus A."/>
            <person name="Monchy S."/>
            <person name="Medigue C."/>
            <person name="Taghavi S."/>
            <person name="McCorkle S."/>
            <person name="Dunn J."/>
            <person name="van der Lelie D."/>
            <person name="Mergeay M."/>
        </authorList>
    </citation>
    <scope>NUCLEOTIDE SEQUENCE [LARGE SCALE GENOMIC DNA]</scope>
    <source>
        <strain>ATCC 43123 / DSM 2839 / NBRC 102507 / CH34</strain>
    </source>
</reference>
<accession>Q1LKL8</accession>
<sequence length="359" mass="37937">MTIKLAIDCMGGDHGVSVTVPAAISFLSSHDDAEMILVGLPDAIGAQLKKLHATDHPRVTVVPATEVITMDDPVEVALRKKKDSSMRVAATQVKEGKADACISAGNTGALMAVSRYVLKTLEGIERPAIATTIPNEQGWGTTVLDLGANADCEPGHLLQFARMADAMVSVVDHKEHPTVGLLNIGEEVIKGNEVVKAAGELLRASELNFYGNVEGNDIFKGTTDIVVCDGFVGNVALKSTEGLAKMIGSMIKEEFTRSWFTKLLAVVAMPVLSRLARRLDPARYNGASLLGLRGLVIKSHGSADAHSFEWAIKRGYDAARNGVIERIARAFAHKSGAGGAATGSPETDAPNPHPDSRAA</sequence>
<protein>
    <recommendedName>
        <fullName evidence="1">Phosphate acyltransferase</fullName>
        <ecNumber evidence="1">2.3.1.274</ecNumber>
    </recommendedName>
    <alternativeName>
        <fullName evidence="1">Acyl-ACP phosphotransacylase</fullName>
    </alternativeName>
    <alternativeName>
        <fullName evidence="1">Acyl-[acyl-carrier-protein]--phosphate acyltransferase</fullName>
    </alternativeName>
    <alternativeName>
        <fullName evidence="1">Phosphate-acyl-ACP acyltransferase</fullName>
    </alternativeName>
</protein>
<evidence type="ECO:0000255" key="1">
    <source>
        <dbReference type="HAMAP-Rule" id="MF_00019"/>
    </source>
</evidence>
<evidence type="ECO:0000256" key="2">
    <source>
        <dbReference type="SAM" id="MobiDB-lite"/>
    </source>
</evidence>
<organism>
    <name type="scientific">Cupriavidus metallidurans (strain ATCC 43123 / DSM 2839 / NBRC 102507 / CH34)</name>
    <name type="common">Ralstonia metallidurans</name>
    <dbReference type="NCBI Taxonomy" id="266264"/>
    <lineage>
        <taxon>Bacteria</taxon>
        <taxon>Pseudomonadati</taxon>
        <taxon>Pseudomonadota</taxon>
        <taxon>Betaproteobacteria</taxon>
        <taxon>Burkholderiales</taxon>
        <taxon>Burkholderiaceae</taxon>
        <taxon>Cupriavidus</taxon>
    </lineage>
</organism>
<keyword id="KW-0963">Cytoplasm</keyword>
<keyword id="KW-0444">Lipid biosynthesis</keyword>
<keyword id="KW-0443">Lipid metabolism</keyword>
<keyword id="KW-0594">Phospholipid biosynthesis</keyword>
<keyword id="KW-1208">Phospholipid metabolism</keyword>
<keyword id="KW-1185">Reference proteome</keyword>
<keyword id="KW-0808">Transferase</keyword>
<name>PLSX_CUPMC</name>
<proteinExistence type="inferred from homology"/>
<dbReference type="EC" id="2.3.1.274" evidence="1"/>
<dbReference type="EMBL" id="CP000352">
    <property type="protein sequence ID" value="ABF09308.1"/>
    <property type="molecule type" value="Genomic_DNA"/>
</dbReference>
<dbReference type="RefSeq" id="WP_011517025.1">
    <property type="nucleotide sequence ID" value="NC_007973.1"/>
</dbReference>
<dbReference type="SMR" id="Q1LKL8"/>
<dbReference type="STRING" id="266264.Rmet_2431"/>
<dbReference type="KEGG" id="rme:Rmet_2431"/>
<dbReference type="eggNOG" id="COG0416">
    <property type="taxonomic scope" value="Bacteria"/>
</dbReference>
<dbReference type="HOGENOM" id="CLU_039379_1_0_4"/>
<dbReference type="UniPathway" id="UPA00085"/>
<dbReference type="Proteomes" id="UP000002429">
    <property type="component" value="Chromosome"/>
</dbReference>
<dbReference type="GO" id="GO:0005737">
    <property type="term" value="C:cytoplasm"/>
    <property type="evidence" value="ECO:0007669"/>
    <property type="project" value="UniProtKB-SubCell"/>
</dbReference>
<dbReference type="GO" id="GO:0043811">
    <property type="term" value="F:phosphate:acyl-[acyl carrier protein] acyltransferase activity"/>
    <property type="evidence" value="ECO:0007669"/>
    <property type="project" value="UniProtKB-UniRule"/>
</dbReference>
<dbReference type="GO" id="GO:0006633">
    <property type="term" value="P:fatty acid biosynthetic process"/>
    <property type="evidence" value="ECO:0007669"/>
    <property type="project" value="UniProtKB-UniRule"/>
</dbReference>
<dbReference type="GO" id="GO:0008654">
    <property type="term" value="P:phospholipid biosynthetic process"/>
    <property type="evidence" value="ECO:0007669"/>
    <property type="project" value="UniProtKB-KW"/>
</dbReference>
<dbReference type="Gene3D" id="3.40.718.10">
    <property type="entry name" value="Isopropylmalate Dehydrogenase"/>
    <property type="match status" value="1"/>
</dbReference>
<dbReference type="HAMAP" id="MF_00019">
    <property type="entry name" value="PlsX"/>
    <property type="match status" value="1"/>
</dbReference>
<dbReference type="InterPro" id="IPR003664">
    <property type="entry name" value="FA_synthesis"/>
</dbReference>
<dbReference type="InterPro" id="IPR012281">
    <property type="entry name" value="Phospholipid_synth_PlsX-like"/>
</dbReference>
<dbReference type="NCBIfam" id="TIGR00182">
    <property type="entry name" value="plsX"/>
    <property type="match status" value="1"/>
</dbReference>
<dbReference type="PANTHER" id="PTHR30100">
    <property type="entry name" value="FATTY ACID/PHOSPHOLIPID SYNTHESIS PROTEIN PLSX"/>
    <property type="match status" value="1"/>
</dbReference>
<dbReference type="PANTHER" id="PTHR30100:SF1">
    <property type="entry name" value="PHOSPHATE ACYLTRANSFERASE"/>
    <property type="match status" value="1"/>
</dbReference>
<dbReference type="Pfam" id="PF02504">
    <property type="entry name" value="FA_synthesis"/>
    <property type="match status" value="1"/>
</dbReference>
<dbReference type="PIRSF" id="PIRSF002465">
    <property type="entry name" value="Phsphlp_syn_PlsX"/>
    <property type="match status" value="1"/>
</dbReference>
<dbReference type="SUPFAM" id="SSF53659">
    <property type="entry name" value="Isocitrate/Isopropylmalate dehydrogenase-like"/>
    <property type="match status" value="1"/>
</dbReference>
<gene>
    <name evidence="1" type="primary">plsX</name>
    <name type="ordered locus">Rmet_2431</name>
</gene>
<feature type="chain" id="PRO_1000001809" description="Phosphate acyltransferase">
    <location>
        <begin position="1"/>
        <end position="359"/>
    </location>
</feature>
<feature type="region of interest" description="Disordered" evidence="2">
    <location>
        <begin position="335"/>
        <end position="359"/>
    </location>
</feature>